<protein>
    <recommendedName>
        <fullName>Alpha-2C adrenergic receptor</fullName>
    </recommendedName>
    <alternativeName>
        <fullName>Alpha-2 adrenergic receptor subtype C4</fullName>
    </alternativeName>
    <alternativeName>
        <fullName>Alpha-2C adrenoreceptor</fullName>
        <shortName>Alpha-2C adrenoceptor</shortName>
        <shortName>Alpha-2CAR</shortName>
    </alternativeName>
</protein>
<keyword id="KW-1003">Cell membrane</keyword>
<keyword id="KW-1015">Disulfide bond</keyword>
<keyword id="KW-0297">G-protein coupled receptor</keyword>
<keyword id="KW-0325">Glycoprotein</keyword>
<keyword id="KW-0472">Membrane</keyword>
<keyword id="KW-0675">Receptor</keyword>
<keyword id="KW-1185">Reference proteome</keyword>
<keyword id="KW-0807">Transducer</keyword>
<keyword id="KW-0812">Transmembrane</keyword>
<keyword id="KW-1133">Transmembrane helix</keyword>
<proteinExistence type="inferred from homology"/>
<comment type="function">
    <text>Alpha-2 adrenergic receptors mediate the catecholamine-induced inhibition of adenylate cyclase through the action of G proteins.</text>
</comment>
<comment type="subcellular location">
    <subcellularLocation>
        <location>Cell membrane</location>
        <topology>Multi-pass membrane protein</topology>
    </subcellularLocation>
</comment>
<comment type="similarity">
    <text evidence="3">Belongs to the G-protein coupled receptor 1 family. Adrenergic receptor subfamily. ADRA2C sub-subfamily.</text>
</comment>
<organism>
    <name type="scientific">Mus musculus</name>
    <name type="common">Mouse</name>
    <dbReference type="NCBI Taxonomy" id="10090"/>
    <lineage>
        <taxon>Eukaryota</taxon>
        <taxon>Metazoa</taxon>
        <taxon>Chordata</taxon>
        <taxon>Craniata</taxon>
        <taxon>Vertebrata</taxon>
        <taxon>Euteleostomi</taxon>
        <taxon>Mammalia</taxon>
        <taxon>Eutheria</taxon>
        <taxon>Euarchontoglires</taxon>
        <taxon>Glires</taxon>
        <taxon>Rodentia</taxon>
        <taxon>Myomorpha</taxon>
        <taxon>Muroidea</taxon>
        <taxon>Muridae</taxon>
        <taxon>Murinae</taxon>
        <taxon>Mus</taxon>
        <taxon>Mus</taxon>
    </lineage>
</organism>
<dbReference type="EMBL" id="M99376">
    <property type="protein sequence ID" value="AAA37212.1"/>
    <property type="molecule type" value="Genomic_DNA"/>
</dbReference>
<dbReference type="EMBL" id="M97516">
    <property type="protein sequence ID" value="AAA37183.1"/>
    <property type="molecule type" value="Genomic_DNA"/>
</dbReference>
<dbReference type="CCDS" id="CCDS19226.1"/>
<dbReference type="PIR" id="A48392">
    <property type="entry name" value="A48392"/>
</dbReference>
<dbReference type="PIR" id="I49480">
    <property type="entry name" value="I49480"/>
</dbReference>
<dbReference type="RefSeq" id="NP_031444.2">
    <property type="nucleotide sequence ID" value="NM_007418.3"/>
</dbReference>
<dbReference type="SMR" id="Q01337"/>
<dbReference type="FunCoup" id="Q01337">
    <property type="interactions" value="652"/>
</dbReference>
<dbReference type="IntAct" id="Q01337">
    <property type="interactions" value="1"/>
</dbReference>
<dbReference type="STRING" id="10090.ENSMUSP00000059705"/>
<dbReference type="ChEMBL" id="CHEMBL4826"/>
<dbReference type="DrugCentral" id="Q01337"/>
<dbReference type="GlyCosmos" id="Q01337">
    <property type="glycosylation" value="2 sites, No reported glycans"/>
</dbReference>
<dbReference type="GlyGen" id="Q01337">
    <property type="glycosylation" value="2 sites"/>
</dbReference>
<dbReference type="iPTMnet" id="Q01337"/>
<dbReference type="PhosphoSitePlus" id="Q01337"/>
<dbReference type="PaxDb" id="10090-ENSMUSP00000059705"/>
<dbReference type="ProteomicsDB" id="285609"/>
<dbReference type="ABCD" id="Q01337">
    <property type="antibodies" value="1 sequenced antibody"/>
</dbReference>
<dbReference type="Antibodypedia" id="21167">
    <property type="antibodies" value="490 antibodies from 33 providers"/>
</dbReference>
<dbReference type="DNASU" id="11553"/>
<dbReference type="Ensembl" id="ENSMUST00000049545.7">
    <property type="protein sequence ID" value="ENSMUSP00000059705.6"/>
    <property type="gene ID" value="ENSMUSG00000045318.7"/>
</dbReference>
<dbReference type="GeneID" id="11553"/>
<dbReference type="KEGG" id="mmu:11553"/>
<dbReference type="UCSC" id="uc009vdd.1">
    <property type="organism name" value="mouse"/>
</dbReference>
<dbReference type="AGR" id="MGI:87936"/>
<dbReference type="CTD" id="152"/>
<dbReference type="MGI" id="MGI:87936">
    <property type="gene designation" value="Adra2c"/>
</dbReference>
<dbReference type="VEuPathDB" id="HostDB:ENSMUSG00000045318"/>
<dbReference type="eggNOG" id="KOG3656">
    <property type="taxonomic scope" value="Eukaryota"/>
</dbReference>
<dbReference type="GeneTree" id="ENSGT00940000161707"/>
<dbReference type="HOGENOM" id="CLU_009579_11_1_1"/>
<dbReference type="InParanoid" id="Q01337"/>
<dbReference type="OMA" id="CREPCRI"/>
<dbReference type="OrthoDB" id="5975661at2759"/>
<dbReference type="PhylomeDB" id="Q01337"/>
<dbReference type="TreeFam" id="TF316350"/>
<dbReference type="Reactome" id="R-MMU-390696">
    <property type="pathway name" value="Adrenoceptors"/>
</dbReference>
<dbReference type="Reactome" id="R-MMU-392023">
    <property type="pathway name" value="Adrenaline signalling through Alpha-2 adrenergic receptor"/>
</dbReference>
<dbReference type="Reactome" id="R-MMU-400042">
    <property type="pathway name" value="Adrenaline,noradrenaline inhibits insulin secretion"/>
</dbReference>
<dbReference type="Reactome" id="R-MMU-418594">
    <property type="pathway name" value="G alpha (i) signalling events"/>
</dbReference>
<dbReference type="Reactome" id="R-MMU-418597">
    <property type="pathway name" value="G alpha (z) signalling events"/>
</dbReference>
<dbReference type="Reactome" id="R-MMU-5683826">
    <property type="pathway name" value="Surfactant metabolism"/>
</dbReference>
<dbReference type="BioGRID-ORCS" id="11553">
    <property type="hits" value="8 hits in 77 CRISPR screens"/>
</dbReference>
<dbReference type="PRO" id="PR:Q01337"/>
<dbReference type="Proteomes" id="UP000000589">
    <property type="component" value="Chromosome 5"/>
</dbReference>
<dbReference type="RNAct" id="Q01337">
    <property type="molecule type" value="protein"/>
</dbReference>
<dbReference type="Bgee" id="ENSMUSG00000045318">
    <property type="expression patterns" value="Expressed in lumbar dorsal root ganglion and 60 other cell types or tissues"/>
</dbReference>
<dbReference type="GO" id="GO:0043679">
    <property type="term" value="C:axon terminus"/>
    <property type="evidence" value="ECO:0007669"/>
    <property type="project" value="Ensembl"/>
</dbReference>
<dbReference type="GO" id="GO:0005737">
    <property type="term" value="C:cytoplasm"/>
    <property type="evidence" value="ECO:0007669"/>
    <property type="project" value="Ensembl"/>
</dbReference>
<dbReference type="GO" id="GO:0098978">
    <property type="term" value="C:glutamatergic synapse"/>
    <property type="evidence" value="ECO:0007669"/>
    <property type="project" value="Ensembl"/>
</dbReference>
<dbReference type="GO" id="GO:0043025">
    <property type="term" value="C:neuronal cell body"/>
    <property type="evidence" value="ECO:0007669"/>
    <property type="project" value="Ensembl"/>
</dbReference>
<dbReference type="GO" id="GO:0098839">
    <property type="term" value="C:postsynaptic density membrane"/>
    <property type="evidence" value="ECO:0007669"/>
    <property type="project" value="Ensembl"/>
</dbReference>
<dbReference type="GO" id="GO:0031694">
    <property type="term" value="F:alpha-2A adrenergic receptor binding"/>
    <property type="evidence" value="ECO:0007669"/>
    <property type="project" value="Ensembl"/>
</dbReference>
<dbReference type="GO" id="GO:0004938">
    <property type="term" value="F:alpha2-adrenergic receptor activity"/>
    <property type="evidence" value="ECO:0000304"/>
    <property type="project" value="MGI"/>
</dbReference>
<dbReference type="GO" id="GO:0051379">
    <property type="term" value="F:epinephrine binding"/>
    <property type="evidence" value="ECO:0007669"/>
    <property type="project" value="Ensembl"/>
</dbReference>
<dbReference type="GO" id="GO:0004930">
    <property type="term" value="F:G protein-coupled receptor activity"/>
    <property type="evidence" value="ECO:0000314"/>
    <property type="project" value="MGI"/>
</dbReference>
<dbReference type="GO" id="GO:0046982">
    <property type="term" value="F:protein heterodimerization activity"/>
    <property type="evidence" value="ECO:0007669"/>
    <property type="project" value="Ensembl"/>
</dbReference>
<dbReference type="GO" id="GO:0042803">
    <property type="term" value="F:protein homodimerization activity"/>
    <property type="evidence" value="ECO:0007669"/>
    <property type="project" value="Ensembl"/>
</dbReference>
<dbReference type="GO" id="GO:0007565">
    <property type="term" value="P:female pregnancy"/>
    <property type="evidence" value="ECO:0007669"/>
    <property type="project" value="Ensembl"/>
</dbReference>
<dbReference type="GO" id="GO:0007186">
    <property type="term" value="P:G protein-coupled receptor signaling pathway"/>
    <property type="evidence" value="ECO:0000314"/>
    <property type="project" value="MGI"/>
</dbReference>
<dbReference type="GO" id="GO:0070473">
    <property type="term" value="P:negative regulation of uterine smooth muscle contraction"/>
    <property type="evidence" value="ECO:0007669"/>
    <property type="project" value="Ensembl"/>
</dbReference>
<dbReference type="GO" id="GO:0030168">
    <property type="term" value="P:platelet activation"/>
    <property type="evidence" value="ECO:0007669"/>
    <property type="project" value="InterPro"/>
</dbReference>
<dbReference type="GO" id="GO:0043410">
    <property type="term" value="P:positive regulation of MAPK cascade"/>
    <property type="evidence" value="ECO:0007669"/>
    <property type="project" value="Ensembl"/>
</dbReference>
<dbReference type="GO" id="GO:0045666">
    <property type="term" value="P:positive regulation of neuron differentiation"/>
    <property type="evidence" value="ECO:0007669"/>
    <property type="project" value="Ensembl"/>
</dbReference>
<dbReference type="GO" id="GO:0051897">
    <property type="term" value="P:positive regulation of phosphatidylinositol 3-kinase/protein kinase B signal transduction"/>
    <property type="evidence" value="ECO:0007669"/>
    <property type="project" value="Ensembl"/>
</dbReference>
<dbReference type="GO" id="GO:0045907">
    <property type="term" value="P:positive regulation of vasoconstriction"/>
    <property type="evidence" value="ECO:0007669"/>
    <property type="project" value="Ensembl"/>
</dbReference>
<dbReference type="CDD" id="cd15323">
    <property type="entry name" value="7tmA_alpha2C_AR"/>
    <property type="match status" value="1"/>
</dbReference>
<dbReference type="FunFam" id="1.20.1070.10:FF:000100">
    <property type="entry name" value="alpha-2B adrenergic receptor"/>
    <property type="match status" value="1"/>
</dbReference>
<dbReference type="FunFam" id="1.20.1070.10:FF:000245">
    <property type="entry name" value="Alpha-2C adrenergic receptor"/>
    <property type="match status" value="1"/>
</dbReference>
<dbReference type="Gene3D" id="1.20.1070.10">
    <property type="entry name" value="Rhodopsin 7-helix transmembrane proteins"/>
    <property type="match status" value="2"/>
</dbReference>
<dbReference type="InterPro" id="IPR002233">
    <property type="entry name" value="ADR_fam"/>
</dbReference>
<dbReference type="InterPro" id="IPR000735">
    <property type="entry name" value="ADRA2C_rcpt"/>
</dbReference>
<dbReference type="InterPro" id="IPR000276">
    <property type="entry name" value="GPCR_Rhodpsn"/>
</dbReference>
<dbReference type="InterPro" id="IPR017452">
    <property type="entry name" value="GPCR_Rhodpsn_7TM"/>
</dbReference>
<dbReference type="PANTHER" id="PTHR24248">
    <property type="entry name" value="ADRENERGIC RECEPTOR-RELATED G-PROTEIN COUPLED RECEPTOR"/>
    <property type="match status" value="1"/>
</dbReference>
<dbReference type="PANTHER" id="PTHR24248:SF25">
    <property type="entry name" value="ALPHA-2C ADRENERGIC RECEPTOR"/>
    <property type="match status" value="1"/>
</dbReference>
<dbReference type="Pfam" id="PF00001">
    <property type="entry name" value="7tm_1"/>
    <property type="match status" value="1"/>
</dbReference>
<dbReference type="PRINTS" id="PR01103">
    <property type="entry name" value="ADRENERGICR"/>
</dbReference>
<dbReference type="PRINTS" id="PR00560">
    <property type="entry name" value="ADRENRGCA2CR"/>
</dbReference>
<dbReference type="PRINTS" id="PR00237">
    <property type="entry name" value="GPCRRHODOPSN"/>
</dbReference>
<dbReference type="SMART" id="SM01381">
    <property type="entry name" value="7TM_GPCR_Srsx"/>
    <property type="match status" value="1"/>
</dbReference>
<dbReference type="SUPFAM" id="SSF81321">
    <property type="entry name" value="Family A G protein-coupled receptor-like"/>
    <property type="match status" value="1"/>
</dbReference>
<dbReference type="PROSITE" id="PS00237">
    <property type="entry name" value="G_PROTEIN_RECEP_F1_1"/>
    <property type="match status" value="1"/>
</dbReference>
<dbReference type="PROSITE" id="PS50262">
    <property type="entry name" value="G_PROTEIN_RECEP_F1_2"/>
    <property type="match status" value="1"/>
</dbReference>
<feature type="chain" id="PRO_0000069106" description="Alpha-2C adrenergic receptor">
    <location>
        <begin position="1"/>
        <end position="458"/>
    </location>
</feature>
<feature type="topological domain" description="Extracellular" evidence="1">
    <location>
        <begin position="1"/>
        <end position="51"/>
    </location>
</feature>
<feature type="transmembrane region" description="Helical; Name=1" evidence="1">
    <location>
        <begin position="52"/>
        <end position="76"/>
    </location>
</feature>
<feature type="topological domain" description="Cytoplasmic" evidence="1">
    <location>
        <begin position="77"/>
        <end position="88"/>
    </location>
</feature>
<feature type="transmembrane region" description="Helical; Name=2" evidence="1">
    <location>
        <begin position="89"/>
        <end position="114"/>
    </location>
</feature>
<feature type="topological domain" description="Extracellular" evidence="1">
    <location>
        <begin position="115"/>
        <end position="124"/>
    </location>
</feature>
<feature type="transmembrane region" description="Helical; Name=3" evidence="1">
    <location>
        <begin position="125"/>
        <end position="147"/>
    </location>
</feature>
<feature type="topological domain" description="Cytoplasmic" evidence="1">
    <location>
        <begin position="148"/>
        <end position="168"/>
    </location>
</feature>
<feature type="transmembrane region" description="Helical; Name=4" evidence="1">
    <location>
        <begin position="169"/>
        <end position="191"/>
    </location>
</feature>
<feature type="topological domain" description="Extracellular" evidence="1">
    <location>
        <begin position="192"/>
        <end position="207"/>
    </location>
</feature>
<feature type="transmembrane region" description="Helical; Name=5" evidence="1">
    <location>
        <begin position="208"/>
        <end position="231"/>
    </location>
</feature>
<feature type="topological domain" description="Cytoplasmic" evidence="1">
    <location>
        <begin position="232"/>
        <end position="379"/>
    </location>
</feature>
<feature type="transmembrane region" description="Helical; Name=6" evidence="1">
    <location>
        <begin position="380"/>
        <end position="403"/>
    </location>
</feature>
<feature type="topological domain" description="Extracellular" evidence="1">
    <location>
        <begin position="404"/>
        <end position="416"/>
    </location>
</feature>
<feature type="transmembrane region" description="Helical; Name=7" evidence="1">
    <location>
        <begin position="417"/>
        <end position="437"/>
    </location>
</feature>
<feature type="topological domain" description="Cytoplasmic" evidence="1">
    <location>
        <begin position="438"/>
        <end position="458"/>
    </location>
</feature>
<feature type="region of interest" description="Disordered" evidence="4">
    <location>
        <begin position="245"/>
        <end position="343"/>
    </location>
</feature>
<feature type="compositionally biased region" description="Basic residues" evidence="4">
    <location>
        <begin position="291"/>
        <end position="303"/>
    </location>
</feature>
<feature type="site" description="Implicated in ligand binding" evidence="1">
    <location>
        <position position="131"/>
    </location>
</feature>
<feature type="site" description="Implicated in catechol agonist binding and receptor activation" evidence="1">
    <location>
        <position position="214"/>
    </location>
</feature>
<feature type="site" description="Implicated in catechol agonist binding and receptor activation" evidence="1">
    <location>
        <position position="218"/>
    </location>
</feature>
<feature type="glycosylation site" description="N-linked (GlcNAc...) asparagine" evidence="2">
    <location>
        <position position="19"/>
    </location>
</feature>
<feature type="glycosylation site" description="N-linked (GlcNAc...) asparagine" evidence="2">
    <location>
        <position position="33"/>
    </location>
</feature>
<feature type="disulfide bond" evidence="3">
    <location>
        <begin position="124"/>
        <end position="202"/>
    </location>
</feature>
<feature type="sequence conflict" description="In Ref. 2; AAA37183." evidence="5" ref="2">
    <original>G</original>
    <variation>V</variation>
    <location>
        <position position="196"/>
    </location>
</feature>
<feature type="sequence conflict" description="In Ref. 2." evidence="5" ref="2">
    <original>G</original>
    <variation>A</variation>
    <location>
        <position position="296"/>
    </location>
</feature>
<feature type="sequence conflict" description="In Ref. 2." evidence="5" ref="2">
    <original>L</original>
    <variation>V</variation>
    <location>
        <position position="298"/>
    </location>
</feature>
<name>ADA2C_MOUSE</name>
<reference key="1">
    <citation type="journal article" date="1992" name="Mol. Pharmacol.">
        <title>Cloning of two mouse genes encoding alpha 2-adrenergic receptor subtypes and identification of a single amino acid in the mouse alpha 2-C10 homolog responsible for an interspecies variation in antagonist binding.</title>
        <authorList>
            <person name="Link R.E."/>
            <person name="Daunt D.A."/>
            <person name="Barsh G."/>
            <person name="Chruscinski A.J."/>
            <person name="Kobilka B.K."/>
        </authorList>
    </citation>
    <scope>NUCLEOTIDE SEQUENCE [GENOMIC DNA]</scope>
</reference>
<reference key="2">
    <citation type="journal article" date="1993" name="Biochem. Mol. Biol. Int.">
        <title>Molecular characterization of a murine homologue of alpha 2C4 adrenoceptor subtype gene.</title>
        <authorList>
            <person name="Chang Y.-H."/>
            <person name="Chang A.C."/>
            <person name="Chen W.-M."/>
            <person name="Chang N.-C.A."/>
        </authorList>
    </citation>
    <scope>NUCLEOTIDE SEQUENCE [GENOMIC DNA]</scope>
    <source>
        <strain>DBA/2J</strain>
    </source>
</reference>
<accession>Q01337</accession>
<gene>
    <name type="primary">Adra2c</name>
</gene>
<sequence length="458" mass="49906">MASPALAAALAAAAAEGPNGSDAGEWGSGGGANASGTDWVPPPGQYSAGAVAGLAAVVGFLIVFTVVGNVLVVIAVLTSRALRAPQNLFLVSLASADILVATLVMPFSLANELMAYWYFGQVWCGVYLALDVLFCTSSIVHLCAISLDRYWSVTQAVEYNLKRTPRRVKATIVAVWLISAVISFPPLVSFYRRPDGAAYPQCGLNDETWYILSSCIGSFFAPCLIMGLVYARIYRVAKLRTRTLSEKRGPAGPDGASPTTENGLGKAAGENGHCAPPRTEVEPDESSAAERRRRRGALRRGGRRREGAEGDTGSADGPGPGLAAEQGARTASRSPGPGGRLSRASSRSVEFFLSRRRRARSSVCRRKVAQAREKRFTFVLAVVMGVFVLCWFPFFFSYSLYGICREACQLPEPLFKFFFWIGYCNSSLNPVIYTVFNQDFRRSFKHILFRRRRRGFRQ</sequence>
<evidence type="ECO:0000250" key="1"/>
<evidence type="ECO:0000255" key="2"/>
<evidence type="ECO:0000255" key="3">
    <source>
        <dbReference type="PROSITE-ProRule" id="PRU00521"/>
    </source>
</evidence>
<evidence type="ECO:0000256" key="4">
    <source>
        <dbReference type="SAM" id="MobiDB-lite"/>
    </source>
</evidence>
<evidence type="ECO:0000305" key="5"/>